<keyword id="KW-0007">Acetylation</keyword>
<keyword id="KW-0479">Metal-binding</keyword>
<keyword id="KW-0687">Ribonucleoprotein</keyword>
<keyword id="KW-0689">Ribosomal protein</keyword>
<keyword id="KW-0694">RNA-binding</keyword>
<keyword id="KW-0699">rRNA-binding</keyword>
<keyword id="KW-0862">Zinc</keyword>
<dbReference type="EMBL" id="CU928164">
    <property type="protein sequence ID" value="CAR19177.1"/>
    <property type="molecule type" value="Genomic_DNA"/>
</dbReference>
<dbReference type="RefSeq" id="WP_000710769.1">
    <property type="nucleotide sequence ID" value="NC_011750.1"/>
</dbReference>
<dbReference type="RefSeq" id="YP_002408988.1">
    <property type="nucleotide sequence ID" value="NC_011750.1"/>
</dbReference>
<dbReference type="SMR" id="B7NU69"/>
<dbReference type="STRING" id="585057.ECIAI39_3058"/>
<dbReference type="GeneID" id="93777962"/>
<dbReference type="KEGG" id="ect:ECIAI39_3058"/>
<dbReference type="PATRIC" id="fig|585057.6.peg.3171"/>
<dbReference type="HOGENOM" id="CLU_114306_4_3_6"/>
<dbReference type="Proteomes" id="UP000000749">
    <property type="component" value="Chromosome"/>
</dbReference>
<dbReference type="GO" id="GO:1990904">
    <property type="term" value="C:ribonucleoprotein complex"/>
    <property type="evidence" value="ECO:0007669"/>
    <property type="project" value="UniProtKB-KW"/>
</dbReference>
<dbReference type="GO" id="GO:0005840">
    <property type="term" value="C:ribosome"/>
    <property type="evidence" value="ECO:0007669"/>
    <property type="project" value="UniProtKB-KW"/>
</dbReference>
<dbReference type="GO" id="GO:0046872">
    <property type="term" value="F:metal ion binding"/>
    <property type="evidence" value="ECO:0007669"/>
    <property type="project" value="UniProtKB-KW"/>
</dbReference>
<dbReference type="GO" id="GO:0019843">
    <property type="term" value="F:rRNA binding"/>
    <property type="evidence" value="ECO:0007669"/>
    <property type="project" value="UniProtKB-KW"/>
</dbReference>
<dbReference type="GO" id="GO:0003735">
    <property type="term" value="F:structural constituent of ribosome"/>
    <property type="evidence" value="ECO:0007669"/>
    <property type="project" value="InterPro"/>
</dbReference>
<dbReference type="GO" id="GO:0006412">
    <property type="term" value="P:translation"/>
    <property type="evidence" value="ECO:0007669"/>
    <property type="project" value="UniProtKB-UniRule"/>
</dbReference>
<dbReference type="FunFam" id="4.10.830.30:FF:000001">
    <property type="entry name" value="50S ribosomal protein L31"/>
    <property type="match status" value="1"/>
</dbReference>
<dbReference type="Gene3D" id="4.10.830.30">
    <property type="entry name" value="Ribosomal protein L31"/>
    <property type="match status" value="1"/>
</dbReference>
<dbReference type="HAMAP" id="MF_00501">
    <property type="entry name" value="Ribosomal_bL31_1"/>
    <property type="match status" value="1"/>
</dbReference>
<dbReference type="InterPro" id="IPR034704">
    <property type="entry name" value="Ribosomal_bL28/bL31-like_sf"/>
</dbReference>
<dbReference type="InterPro" id="IPR002150">
    <property type="entry name" value="Ribosomal_bL31"/>
</dbReference>
<dbReference type="InterPro" id="IPR027491">
    <property type="entry name" value="Ribosomal_bL31_A"/>
</dbReference>
<dbReference type="InterPro" id="IPR042105">
    <property type="entry name" value="Ribosomal_bL31_sf"/>
</dbReference>
<dbReference type="NCBIfam" id="TIGR00105">
    <property type="entry name" value="L31"/>
    <property type="match status" value="1"/>
</dbReference>
<dbReference type="NCBIfam" id="NF000612">
    <property type="entry name" value="PRK00019.1"/>
    <property type="match status" value="1"/>
</dbReference>
<dbReference type="NCBIfam" id="NF001809">
    <property type="entry name" value="PRK00528.1"/>
    <property type="match status" value="1"/>
</dbReference>
<dbReference type="PANTHER" id="PTHR33280">
    <property type="entry name" value="50S RIBOSOMAL PROTEIN L31, CHLOROPLASTIC"/>
    <property type="match status" value="1"/>
</dbReference>
<dbReference type="PANTHER" id="PTHR33280:SF6">
    <property type="entry name" value="LARGE RIBOSOMAL SUBUNIT PROTEIN BL31A"/>
    <property type="match status" value="1"/>
</dbReference>
<dbReference type="Pfam" id="PF01197">
    <property type="entry name" value="Ribosomal_L31"/>
    <property type="match status" value="1"/>
</dbReference>
<dbReference type="PRINTS" id="PR01249">
    <property type="entry name" value="RIBOSOMALL31"/>
</dbReference>
<dbReference type="SUPFAM" id="SSF143800">
    <property type="entry name" value="L28p-like"/>
    <property type="match status" value="1"/>
</dbReference>
<dbReference type="PROSITE" id="PS01143">
    <property type="entry name" value="RIBOSOMAL_L31"/>
    <property type="match status" value="1"/>
</dbReference>
<sequence length="70" mass="7871">MKKDIHPKYEEITASCSCGNVMKIRSTVGHDLNLDVCSKCHPFFTGKQRDVATGGRVDRFNKRFNIPGSK</sequence>
<proteinExistence type="inferred from homology"/>
<protein>
    <recommendedName>
        <fullName evidence="1">Large ribosomal subunit protein bL31</fullName>
    </recommendedName>
    <alternativeName>
        <fullName evidence="2">50S ribosomal protein L31</fullName>
    </alternativeName>
</protein>
<organism>
    <name type="scientific">Escherichia coli O7:K1 (strain IAI39 / ExPEC)</name>
    <dbReference type="NCBI Taxonomy" id="585057"/>
    <lineage>
        <taxon>Bacteria</taxon>
        <taxon>Pseudomonadati</taxon>
        <taxon>Pseudomonadota</taxon>
        <taxon>Gammaproteobacteria</taxon>
        <taxon>Enterobacterales</taxon>
        <taxon>Enterobacteriaceae</taxon>
        <taxon>Escherichia</taxon>
    </lineage>
</organism>
<feature type="chain" id="PRO_1000126615" description="Large ribosomal subunit protein bL31">
    <location>
        <begin position="1"/>
        <end position="70"/>
    </location>
</feature>
<feature type="binding site" evidence="1">
    <location>
        <position position="16"/>
    </location>
    <ligand>
        <name>Zn(2+)</name>
        <dbReference type="ChEBI" id="CHEBI:29105"/>
    </ligand>
</feature>
<feature type="binding site" evidence="1">
    <location>
        <position position="18"/>
    </location>
    <ligand>
        <name>Zn(2+)</name>
        <dbReference type="ChEBI" id="CHEBI:29105"/>
    </ligand>
</feature>
<feature type="binding site" evidence="1">
    <location>
        <position position="37"/>
    </location>
    <ligand>
        <name>Zn(2+)</name>
        <dbReference type="ChEBI" id="CHEBI:29105"/>
    </ligand>
</feature>
<feature type="binding site" evidence="1">
    <location>
        <position position="40"/>
    </location>
    <ligand>
        <name>Zn(2+)</name>
        <dbReference type="ChEBI" id="CHEBI:29105"/>
    </ligand>
</feature>
<feature type="modified residue" description="N6-acetyllysine" evidence="1">
    <location>
        <position position="8"/>
    </location>
</feature>
<evidence type="ECO:0000255" key="1">
    <source>
        <dbReference type="HAMAP-Rule" id="MF_00501"/>
    </source>
</evidence>
<evidence type="ECO:0000305" key="2"/>
<reference key="1">
    <citation type="journal article" date="2009" name="PLoS Genet.">
        <title>Organised genome dynamics in the Escherichia coli species results in highly diverse adaptive paths.</title>
        <authorList>
            <person name="Touchon M."/>
            <person name="Hoede C."/>
            <person name="Tenaillon O."/>
            <person name="Barbe V."/>
            <person name="Baeriswyl S."/>
            <person name="Bidet P."/>
            <person name="Bingen E."/>
            <person name="Bonacorsi S."/>
            <person name="Bouchier C."/>
            <person name="Bouvet O."/>
            <person name="Calteau A."/>
            <person name="Chiapello H."/>
            <person name="Clermont O."/>
            <person name="Cruveiller S."/>
            <person name="Danchin A."/>
            <person name="Diard M."/>
            <person name="Dossat C."/>
            <person name="Karoui M.E."/>
            <person name="Frapy E."/>
            <person name="Garry L."/>
            <person name="Ghigo J.M."/>
            <person name="Gilles A.M."/>
            <person name="Johnson J."/>
            <person name="Le Bouguenec C."/>
            <person name="Lescat M."/>
            <person name="Mangenot S."/>
            <person name="Martinez-Jehanne V."/>
            <person name="Matic I."/>
            <person name="Nassif X."/>
            <person name="Oztas S."/>
            <person name="Petit M.A."/>
            <person name="Pichon C."/>
            <person name="Rouy Z."/>
            <person name="Ruf C.S."/>
            <person name="Schneider D."/>
            <person name="Tourret J."/>
            <person name="Vacherie B."/>
            <person name="Vallenet D."/>
            <person name="Medigue C."/>
            <person name="Rocha E.P.C."/>
            <person name="Denamur E."/>
        </authorList>
    </citation>
    <scope>NUCLEOTIDE SEQUENCE [LARGE SCALE GENOMIC DNA]</scope>
    <source>
        <strain>IAI39 / ExPEC</strain>
    </source>
</reference>
<gene>
    <name evidence="1" type="primary">rpmE</name>
    <name type="ordered locus">ECIAI39_3058</name>
</gene>
<comment type="function">
    <text evidence="1">Binds the 23S rRNA.</text>
</comment>
<comment type="cofactor">
    <cofactor evidence="1">
        <name>Zn(2+)</name>
        <dbReference type="ChEBI" id="CHEBI:29105"/>
    </cofactor>
    <text evidence="1">Binds 1 zinc ion per subunit.</text>
</comment>
<comment type="subunit">
    <text evidence="1">Part of the 50S ribosomal subunit.</text>
</comment>
<comment type="similarity">
    <text evidence="1">Belongs to the bacterial ribosomal protein bL31 family. Type A subfamily.</text>
</comment>
<name>RL31_ECO7I</name>
<accession>B7NU69</accession>